<gene>
    <name evidence="1" type="primary">cysS</name>
    <name type="ordered locus">MS0622</name>
</gene>
<proteinExistence type="inferred from homology"/>
<comment type="catalytic activity">
    <reaction evidence="1">
        <text>tRNA(Cys) + L-cysteine + ATP = L-cysteinyl-tRNA(Cys) + AMP + diphosphate</text>
        <dbReference type="Rhea" id="RHEA:17773"/>
        <dbReference type="Rhea" id="RHEA-COMP:9661"/>
        <dbReference type="Rhea" id="RHEA-COMP:9679"/>
        <dbReference type="ChEBI" id="CHEBI:30616"/>
        <dbReference type="ChEBI" id="CHEBI:33019"/>
        <dbReference type="ChEBI" id="CHEBI:35235"/>
        <dbReference type="ChEBI" id="CHEBI:78442"/>
        <dbReference type="ChEBI" id="CHEBI:78517"/>
        <dbReference type="ChEBI" id="CHEBI:456215"/>
        <dbReference type="EC" id="6.1.1.16"/>
    </reaction>
</comment>
<comment type="cofactor">
    <cofactor evidence="1">
        <name>Zn(2+)</name>
        <dbReference type="ChEBI" id="CHEBI:29105"/>
    </cofactor>
    <text evidence="1">Binds 1 zinc ion per subunit.</text>
</comment>
<comment type="subunit">
    <text evidence="1">Monomer.</text>
</comment>
<comment type="subcellular location">
    <subcellularLocation>
        <location evidence="1">Cytoplasm</location>
    </subcellularLocation>
</comment>
<comment type="similarity">
    <text evidence="1">Belongs to the class-I aminoacyl-tRNA synthetase family.</text>
</comment>
<comment type="sequence caution" evidence="2">
    <conflict type="erroneous initiation">
        <sequence resource="EMBL-CDS" id="AAU37229"/>
    </conflict>
</comment>
<keyword id="KW-0030">Aminoacyl-tRNA synthetase</keyword>
<keyword id="KW-0067">ATP-binding</keyword>
<keyword id="KW-0963">Cytoplasm</keyword>
<keyword id="KW-0436">Ligase</keyword>
<keyword id="KW-0479">Metal-binding</keyword>
<keyword id="KW-0547">Nucleotide-binding</keyword>
<keyword id="KW-0648">Protein biosynthesis</keyword>
<keyword id="KW-0862">Zinc</keyword>
<reference key="1">
    <citation type="journal article" date="2004" name="Nat. Biotechnol.">
        <title>The genome sequence of the capnophilic rumen bacterium Mannheimia succiniciproducens.</title>
        <authorList>
            <person name="Hong S.H."/>
            <person name="Kim J.S."/>
            <person name="Lee S.Y."/>
            <person name="In Y.H."/>
            <person name="Choi S.S."/>
            <person name="Rih J.-K."/>
            <person name="Kim C.H."/>
            <person name="Jeong H."/>
            <person name="Hur C.G."/>
            <person name="Kim J.J."/>
        </authorList>
    </citation>
    <scope>NUCLEOTIDE SEQUENCE [LARGE SCALE GENOMIC DNA]</scope>
    <source>
        <strain>KCTC 0769BP / MBEL55E</strain>
    </source>
</reference>
<name>SYC_MANSM</name>
<organism>
    <name type="scientific">Mannheimia succiniciproducens (strain KCTC 0769BP / MBEL55E)</name>
    <dbReference type="NCBI Taxonomy" id="221988"/>
    <lineage>
        <taxon>Bacteria</taxon>
        <taxon>Pseudomonadati</taxon>
        <taxon>Pseudomonadota</taxon>
        <taxon>Gammaproteobacteria</taxon>
        <taxon>Pasteurellales</taxon>
        <taxon>Pasteurellaceae</taxon>
        <taxon>Basfia</taxon>
    </lineage>
</organism>
<sequence>MLKIFNTLTREKEEFKPINPNKVGMYVCGVTVYDLCHFGHGRTFVSFDVITRYLRYLGYDLRYVRNITDVDDKIIKRALENNETCDQLVERMIAEMHKDFDALNILRPDVEPRATKHIPEIIAMVETLIRRGHAYVAEDGDVMFDVESFQKYGALSRQNLEQLQAGARVEIKSVKKNPMDFVLWKMSKPNEPSWDSPWGKGRPGWHIECSAMNDKELGNHFDIHGGGSDLMFPHHENEIAQSCCAHDGEYVNYWLHTGMLTINEEKMSKSLNNFFTIRDILTKYDAESVRYFFLTAQYRSLLDYSEENIGLARKALERLYTALRGCETVEIPAEDQYVIDFKTAMDDDFNTPGALAVLFELAREINKLKTEDQTKANQLASRLKQLAGVLGLLEQAPETFLQGDAADAEVSKIEALIKRRNEARAAKDWAAADAARNELTAMGVVLEDGAKGTTWRKL</sequence>
<dbReference type="EC" id="6.1.1.16" evidence="1"/>
<dbReference type="EMBL" id="AE016827">
    <property type="protein sequence ID" value="AAU37229.1"/>
    <property type="status" value="ALT_INIT"/>
    <property type="molecule type" value="Genomic_DNA"/>
</dbReference>
<dbReference type="RefSeq" id="WP_041639575.1">
    <property type="nucleotide sequence ID" value="NC_006300.1"/>
</dbReference>
<dbReference type="SMR" id="Q65UY1"/>
<dbReference type="STRING" id="221988.MS0622"/>
<dbReference type="KEGG" id="msu:MS0622"/>
<dbReference type="eggNOG" id="COG0215">
    <property type="taxonomic scope" value="Bacteria"/>
</dbReference>
<dbReference type="HOGENOM" id="CLU_013528_0_1_6"/>
<dbReference type="OrthoDB" id="9815130at2"/>
<dbReference type="Proteomes" id="UP000000607">
    <property type="component" value="Chromosome"/>
</dbReference>
<dbReference type="GO" id="GO:0005829">
    <property type="term" value="C:cytosol"/>
    <property type="evidence" value="ECO:0007669"/>
    <property type="project" value="TreeGrafter"/>
</dbReference>
<dbReference type="GO" id="GO:0005524">
    <property type="term" value="F:ATP binding"/>
    <property type="evidence" value="ECO:0007669"/>
    <property type="project" value="UniProtKB-UniRule"/>
</dbReference>
<dbReference type="GO" id="GO:0004817">
    <property type="term" value="F:cysteine-tRNA ligase activity"/>
    <property type="evidence" value="ECO:0007669"/>
    <property type="project" value="UniProtKB-UniRule"/>
</dbReference>
<dbReference type="GO" id="GO:0008270">
    <property type="term" value="F:zinc ion binding"/>
    <property type="evidence" value="ECO:0007669"/>
    <property type="project" value="UniProtKB-UniRule"/>
</dbReference>
<dbReference type="GO" id="GO:0006423">
    <property type="term" value="P:cysteinyl-tRNA aminoacylation"/>
    <property type="evidence" value="ECO:0007669"/>
    <property type="project" value="UniProtKB-UniRule"/>
</dbReference>
<dbReference type="CDD" id="cd07963">
    <property type="entry name" value="Anticodon_Ia_Cys"/>
    <property type="match status" value="1"/>
</dbReference>
<dbReference type="CDD" id="cd00672">
    <property type="entry name" value="CysRS_core"/>
    <property type="match status" value="1"/>
</dbReference>
<dbReference type="FunFam" id="3.40.50.620:FF:000009">
    <property type="entry name" value="Cysteine--tRNA ligase"/>
    <property type="match status" value="1"/>
</dbReference>
<dbReference type="Gene3D" id="1.20.120.1910">
    <property type="entry name" value="Cysteine-tRNA ligase, C-terminal anti-codon recognition domain"/>
    <property type="match status" value="1"/>
</dbReference>
<dbReference type="Gene3D" id="3.40.50.620">
    <property type="entry name" value="HUPs"/>
    <property type="match status" value="1"/>
</dbReference>
<dbReference type="HAMAP" id="MF_00041">
    <property type="entry name" value="Cys_tRNA_synth"/>
    <property type="match status" value="1"/>
</dbReference>
<dbReference type="InterPro" id="IPR015803">
    <property type="entry name" value="Cys-tRNA-ligase"/>
</dbReference>
<dbReference type="InterPro" id="IPR015273">
    <property type="entry name" value="Cys-tRNA-synt_Ia_DALR"/>
</dbReference>
<dbReference type="InterPro" id="IPR024909">
    <property type="entry name" value="Cys-tRNA/MSH_ligase"/>
</dbReference>
<dbReference type="InterPro" id="IPR056411">
    <property type="entry name" value="CysS_C"/>
</dbReference>
<dbReference type="InterPro" id="IPR014729">
    <property type="entry name" value="Rossmann-like_a/b/a_fold"/>
</dbReference>
<dbReference type="InterPro" id="IPR032678">
    <property type="entry name" value="tRNA-synt_1_cat_dom"/>
</dbReference>
<dbReference type="InterPro" id="IPR009080">
    <property type="entry name" value="tRNAsynth_Ia_anticodon-bd"/>
</dbReference>
<dbReference type="NCBIfam" id="TIGR00435">
    <property type="entry name" value="cysS"/>
    <property type="match status" value="1"/>
</dbReference>
<dbReference type="PANTHER" id="PTHR10890:SF3">
    <property type="entry name" value="CYSTEINE--TRNA LIGASE, CYTOPLASMIC"/>
    <property type="match status" value="1"/>
</dbReference>
<dbReference type="PANTHER" id="PTHR10890">
    <property type="entry name" value="CYSTEINYL-TRNA SYNTHETASE"/>
    <property type="match status" value="1"/>
</dbReference>
<dbReference type="Pfam" id="PF23493">
    <property type="entry name" value="CysS_C"/>
    <property type="match status" value="1"/>
</dbReference>
<dbReference type="Pfam" id="PF09190">
    <property type="entry name" value="DALR_2"/>
    <property type="match status" value="1"/>
</dbReference>
<dbReference type="Pfam" id="PF01406">
    <property type="entry name" value="tRNA-synt_1e"/>
    <property type="match status" value="1"/>
</dbReference>
<dbReference type="PRINTS" id="PR00983">
    <property type="entry name" value="TRNASYNTHCYS"/>
</dbReference>
<dbReference type="SMART" id="SM00840">
    <property type="entry name" value="DALR_2"/>
    <property type="match status" value="1"/>
</dbReference>
<dbReference type="SUPFAM" id="SSF47323">
    <property type="entry name" value="Anticodon-binding domain of a subclass of class I aminoacyl-tRNA synthetases"/>
    <property type="match status" value="1"/>
</dbReference>
<dbReference type="SUPFAM" id="SSF52374">
    <property type="entry name" value="Nucleotidylyl transferase"/>
    <property type="match status" value="1"/>
</dbReference>
<feature type="chain" id="PRO_0000159424" description="Cysteine--tRNA ligase">
    <location>
        <begin position="1"/>
        <end position="458"/>
    </location>
</feature>
<feature type="short sequence motif" description="'HIGH' region">
    <location>
        <begin position="30"/>
        <end position="40"/>
    </location>
</feature>
<feature type="short sequence motif" description="'KMSKS' region">
    <location>
        <begin position="266"/>
        <end position="270"/>
    </location>
</feature>
<feature type="binding site" evidence="1">
    <location>
        <position position="28"/>
    </location>
    <ligand>
        <name>Zn(2+)</name>
        <dbReference type="ChEBI" id="CHEBI:29105"/>
    </ligand>
</feature>
<feature type="binding site" evidence="1">
    <location>
        <position position="209"/>
    </location>
    <ligand>
        <name>Zn(2+)</name>
        <dbReference type="ChEBI" id="CHEBI:29105"/>
    </ligand>
</feature>
<feature type="binding site" evidence="1">
    <location>
        <position position="234"/>
    </location>
    <ligand>
        <name>Zn(2+)</name>
        <dbReference type="ChEBI" id="CHEBI:29105"/>
    </ligand>
</feature>
<feature type="binding site" evidence="1">
    <location>
        <position position="238"/>
    </location>
    <ligand>
        <name>Zn(2+)</name>
        <dbReference type="ChEBI" id="CHEBI:29105"/>
    </ligand>
</feature>
<feature type="binding site" evidence="1">
    <location>
        <position position="269"/>
    </location>
    <ligand>
        <name>ATP</name>
        <dbReference type="ChEBI" id="CHEBI:30616"/>
    </ligand>
</feature>
<evidence type="ECO:0000255" key="1">
    <source>
        <dbReference type="HAMAP-Rule" id="MF_00041"/>
    </source>
</evidence>
<evidence type="ECO:0000305" key="2"/>
<accession>Q65UY1</accession>
<protein>
    <recommendedName>
        <fullName evidence="1">Cysteine--tRNA ligase</fullName>
        <ecNumber evidence="1">6.1.1.16</ecNumber>
    </recommendedName>
    <alternativeName>
        <fullName evidence="1">Cysteinyl-tRNA synthetase</fullName>
        <shortName evidence="1">CysRS</shortName>
    </alternativeName>
</protein>